<sequence length="433" mass="47488">MLDIQLLRKDLDGVAQRLADRGYTLDVAAFSALEAERRAIQTRTEELQARRNSLSKQIGAMKGKGEDTSAVMAEVGGIGDEMKAGEAKLGEIQARLSDLMLGMPNVAHESVPVGKDEADNVEARRWGTPRQFDFEVKDHVDVGTPLGLDFETGAKLAGARFTMLRGSIARLHRALAQFMIDTHTLQHGYTETYTPYIVNPEILYGTGQLPKFADDMFRVEKGGEENKVTQYLISTSEISLTNTVRESIVDASALPIKLTAHSPCFRSEAGSYGRDTRGMIRQHQFDKVEMVQVVAPEASYAALDEMVGHAEAILQKLGLPYRVITLCTGDMGFSAAKTFDLEVWLPAQNTYREISSCSNTEAFQARRMQARFRNAQGKPELVHTLNGSGLAVGRTLVAVLENYQNADGSVTVPEALRPYMGGIERIDAPAQAS</sequence>
<keyword id="KW-0030">Aminoacyl-tRNA synthetase</keyword>
<keyword id="KW-0067">ATP-binding</keyword>
<keyword id="KW-0963">Cytoplasm</keyword>
<keyword id="KW-0436">Ligase</keyword>
<keyword id="KW-0547">Nucleotide-binding</keyword>
<keyword id="KW-0648">Protein biosynthesis</keyword>
<reference key="1">
    <citation type="submission" date="2005-10" db="EMBL/GenBank/DDBJ databases">
        <title>Complete sequence of chromosome 1 of Burkholderia sp. 383.</title>
        <authorList>
            <consortium name="US DOE Joint Genome Institute"/>
            <person name="Copeland A."/>
            <person name="Lucas S."/>
            <person name="Lapidus A."/>
            <person name="Barry K."/>
            <person name="Detter J.C."/>
            <person name="Glavina T."/>
            <person name="Hammon N."/>
            <person name="Israni S."/>
            <person name="Pitluck S."/>
            <person name="Chain P."/>
            <person name="Malfatti S."/>
            <person name="Shin M."/>
            <person name="Vergez L."/>
            <person name="Schmutz J."/>
            <person name="Larimer F."/>
            <person name="Land M."/>
            <person name="Kyrpides N."/>
            <person name="Lykidis A."/>
            <person name="Richardson P."/>
        </authorList>
    </citation>
    <scope>NUCLEOTIDE SEQUENCE [LARGE SCALE GENOMIC DNA]</scope>
    <source>
        <strain>ATCC 17760 / DSM 23089 / LMG 22485 / NCIMB 9086 / R18194 / 383</strain>
    </source>
</reference>
<evidence type="ECO:0000255" key="1">
    <source>
        <dbReference type="HAMAP-Rule" id="MF_00176"/>
    </source>
</evidence>
<protein>
    <recommendedName>
        <fullName evidence="1">Serine--tRNA ligase</fullName>
        <ecNumber evidence="1">6.1.1.11</ecNumber>
    </recommendedName>
    <alternativeName>
        <fullName evidence="1">Seryl-tRNA synthetase</fullName>
        <shortName evidence="1">SerRS</shortName>
    </alternativeName>
    <alternativeName>
        <fullName evidence="1">Seryl-tRNA(Ser/Sec) synthetase</fullName>
    </alternativeName>
</protein>
<dbReference type="EC" id="6.1.1.11" evidence="1"/>
<dbReference type="EMBL" id="CP000151">
    <property type="protein sequence ID" value="ABB07679.1"/>
    <property type="molecule type" value="Genomic_DNA"/>
</dbReference>
<dbReference type="RefSeq" id="WP_011351260.1">
    <property type="nucleotide sequence ID" value="NC_007510.1"/>
</dbReference>
<dbReference type="SMR" id="Q39IN7"/>
<dbReference type="GeneID" id="45093978"/>
<dbReference type="KEGG" id="bur:Bcep18194_A4082"/>
<dbReference type="PATRIC" id="fig|482957.22.peg.965"/>
<dbReference type="HOGENOM" id="CLU_023797_1_1_4"/>
<dbReference type="UniPathway" id="UPA00906">
    <property type="reaction ID" value="UER00895"/>
</dbReference>
<dbReference type="Proteomes" id="UP000002705">
    <property type="component" value="Chromosome 1"/>
</dbReference>
<dbReference type="GO" id="GO:0005737">
    <property type="term" value="C:cytoplasm"/>
    <property type="evidence" value="ECO:0007669"/>
    <property type="project" value="UniProtKB-SubCell"/>
</dbReference>
<dbReference type="GO" id="GO:0005524">
    <property type="term" value="F:ATP binding"/>
    <property type="evidence" value="ECO:0007669"/>
    <property type="project" value="UniProtKB-UniRule"/>
</dbReference>
<dbReference type="GO" id="GO:0004828">
    <property type="term" value="F:serine-tRNA ligase activity"/>
    <property type="evidence" value="ECO:0007669"/>
    <property type="project" value="UniProtKB-UniRule"/>
</dbReference>
<dbReference type="GO" id="GO:0016260">
    <property type="term" value="P:selenocysteine biosynthetic process"/>
    <property type="evidence" value="ECO:0007669"/>
    <property type="project" value="UniProtKB-UniRule"/>
</dbReference>
<dbReference type="GO" id="GO:0006434">
    <property type="term" value="P:seryl-tRNA aminoacylation"/>
    <property type="evidence" value="ECO:0007669"/>
    <property type="project" value="UniProtKB-UniRule"/>
</dbReference>
<dbReference type="CDD" id="cd00770">
    <property type="entry name" value="SerRS_core"/>
    <property type="match status" value="1"/>
</dbReference>
<dbReference type="Gene3D" id="3.30.930.10">
    <property type="entry name" value="Bira Bifunctional Protein, Domain 2"/>
    <property type="match status" value="1"/>
</dbReference>
<dbReference type="Gene3D" id="1.10.287.40">
    <property type="entry name" value="Serine-tRNA synthetase, tRNA binding domain"/>
    <property type="match status" value="1"/>
</dbReference>
<dbReference type="HAMAP" id="MF_00176">
    <property type="entry name" value="Ser_tRNA_synth_type1"/>
    <property type="match status" value="1"/>
</dbReference>
<dbReference type="InterPro" id="IPR002314">
    <property type="entry name" value="aa-tRNA-synt_IIb"/>
</dbReference>
<dbReference type="InterPro" id="IPR006195">
    <property type="entry name" value="aa-tRNA-synth_II"/>
</dbReference>
<dbReference type="InterPro" id="IPR045864">
    <property type="entry name" value="aa-tRNA-synth_II/BPL/LPL"/>
</dbReference>
<dbReference type="InterPro" id="IPR002317">
    <property type="entry name" value="Ser-tRNA-ligase_type_1"/>
</dbReference>
<dbReference type="InterPro" id="IPR015866">
    <property type="entry name" value="Ser-tRNA-synth_1_N"/>
</dbReference>
<dbReference type="InterPro" id="IPR042103">
    <property type="entry name" value="SerRS_1_N_sf"/>
</dbReference>
<dbReference type="InterPro" id="IPR033729">
    <property type="entry name" value="SerRS_core"/>
</dbReference>
<dbReference type="InterPro" id="IPR010978">
    <property type="entry name" value="tRNA-bd_arm"/>
</dbReference>
<dbReference type="NCBIfam" id="TIGR00414">
    <property type="entry name" value="serS"/>
    <property type="match status" value="1"/>
</dbReference>
<dbReference type="PANTHER" id="PTHR43697:SF1">
    <property type="entry name" value="SERINE--TRNA LIGASE"/>
    <property type="match status" value="1"/>
</dbReference>
<dbReference type="PANTHER" id="PTHR43697">
    <property type="entry name" value="SERYL-TRNA SYNTHETASE"/>
    <property type="match status" value="1"/>
</dbReference>
<dbReference type="Pfam" id="PF02403">
    <property type="entry name" value="Seryl_tRNA_N"/>
    <property type="match status" value="1"/>
</dbReference>
<dbReference type="Pfam" id="PF00587">
    <property type="entry name" value="tRNA-synt_2b"/>
    <property type="match status" value="1"/>
</dbReference>
<dbReference type="PIRSF" id="PIRSF001529">
    <property type="entry name" value="Ser-tRNA-synth_IIa"/>
    <property type="match status" value="1"/>
</dbReference>
<dbReference type="PRINTS" id="PR00981">
    <property type="entry name" value="TRNASYNTHSER"/>
</dbReference>
<dbReference type="SUPFAM" id="SSF55681">
    <property type="entry name" value="Class II aaRS and biotin synthetases"/>
    <property type="match status" value="1"/>
</dbReference>
<dbReference type="SUPFAM" id="SSF46589">
    <property type="entry name" value="tRNA-binding arm"/>
    <property type="match status" value="1"/>
</dbReference>
<dbReference type="PROSITE" id="PS50862">
    <property type="entry name" value="AA_TRNA_LIGASE_II"/>
    <property type="match status" value="1"/>
</dbReference>
<gene>
    <name evidence="1" type="primary">serS</name>
    <name type="ordered locus">Bcep18194_A4082</name>
</gene>
<name>SYS_BURL3</name>
<comment type="function">
    <text evidence="1">Catalyzes the attachment of serine to tRNA(Ser). Is also able to aminoacylate tRNA(Sec) with serine, to form the misacylated tRNA L-seryl-tRNA(Sec), which will be further converted into selenocysteinyl-tRNA(Sec).</text>
</comment>
<comment type="catalytic activity">
    <reaction evidence="1">
        <text>tRNA(Ser) + L-serine + ATP = L-seryl-tRNA(Ser) + AMP + diphosphate + H(+)</text>
        <dbReference type="Rhea" id="RHEA:12292"/>
        <dbReference type="Rhea" id="RHEA-COMP:9669"/>
        <dbReference type="Rhea" id="RHEA-COMP:9703"/>
        <dbReference type="ChEBI" id="CHEBI:15378"/>
        <dbReference type="ChEBI" id="CHEBI:30616"/>
        <dbReference type="ChEBI" id="CHEBI:33019"/>
        <dbReference type="ChEBI" id="CHEBI:33384"/>
        <dbReference type="ChEBI" id="CHEBI:78442"/>
        <dbReference type="ChEBI" id="CHEBI:78533"/>
        <dbReference type="ChEBI" id="CHEBI:456215"/>
        <dbReference type="EC" id="6.1.1.11"/>
    </reaction>
</comment>
<comment type="catalytic activity">
    <reaction evidence="1">
        <text>tRNA(Sec) + L-serine + ATP = L-seryl-tRNA(Sec) + AMP + diphosphate + H(+)</text>
        <dbReference type="Rhea" id="RHEA:42580"/>
        <dbReference type="Rhea" id="RHEA-COMP:9742"/>
        <dbReference type="Rhea" id="RHEA-COMP:10128"/>
        <dbReference type="ChEBI" id="CHEBI:15378"/>
        <dbReference type="ChEBI" id="CHEBI:30616"/>
        <dbReference type="ChEBI" id="CHEBI:33019"/>
        <dbReference type="ChEBI" id="CHEBI:33384"/>
        <dbReference type="ChEBI" id="CHEBI:78442"/>
        <dbReference type="ChEBI" id="CHEBI:78533"/>
        <dbReference type="ChEBI" id="CHEBI:456215"/>
        <dbReference type="EC" id="6.1.1.11"/>
    </reaction>
</comment>
<comment type="pathway">
    <text evidence="1">Aminoacyl-tRNA biosynthesis; selenocysteinyl-tRNA(Sec) biosynthesis; L-seryl-tRNA(Sec) from L-serine and tRNA(Sec): step 1/1.</text>
</comment>
<comment type="subunit">
    <text evidence="1">Homodimer. The tRNA molecule binds across the dimer.</text>
</comment>
<comment type="subcellular location">
    <subcellularLocation>
        <location evidence="1">Cytoplasm</location>
    </subcellularLocation>
</comment>
<comment type="domain">
    <text evidence="1">Consists of two distinct domains, a catalytic core and a N-terminal extension that is involved in tRNA binding.</text>
</comment>
<comment type="similarity">
    <text evidence="1">Belongs to the class-II aminoacyl-tRNA synthetase family. Type-1 seryl-tRNA synthetase subfamily.</text>
</comment>
<organism>
    <name type="scientific">Burkholderia lata (strain ATCC 17760 / DSM 23089 / LMG 22485 / NCIMB 9086 / R18194 / 383)</name>
    <dbReference type="NCBI Taxonomy" id="482957"/>
    <lineage>
        <taxon>Bacteria</taxon>
        <taxon>Pseudomonadati</taxon>
        <taxon>Pseudomonadota</taxon>
        <taxon>Betaproteobacteria</taxon>
        <taxon>Burkholderiales</taxon>
        <taxon>Burkholderiaceae</taxon>
        <taxon>Burkholderia</taxon>
        <taxon>Burkholderia cepacia complex</taxon>
    </lineage>
</organism>
<feature type="chain" id="PRO_1000019635" description="Serine--tRNA ligase">
    <location>
        <begin position="1"/>
        <end position="433"/>
    </location>
</feature>
<feature type="binding site" evidence="1">
    <location>
        <begin position="235"/>
        <end position="237"/>
    </location>
    <ligand>
        <name>L-serine</name>
        <dbReference type="ChEBI" id="CHEBI:33384"/>
    </ligand>
</feature>
<feature type="binding site" evidence="1">
    <location>
        <begin position="266"/>
        <end position="268"/>
    </location>
    <ligand>
        <name>ATP</name>
        <dbReference type="ChEBI" id="CHEBI:30616"/>
    </ligand>
</feature>
<feature type="binding site" evidence="1">
    <location>
        <position position="289"/>
    </location>
    <ligand>
        <name>L-serine</name>
        <dbReference type="ChEBI" id="CHEBI:33384"/>
    </ligand>
</feature>
<feature type="binding site" evidence="1">
    <location>
        <begin position="353"/>
        <end position="356"/>
    </location>
    <ligand>
        <name>ATP</name>
        <dbReference type="ChEBI" id="CHEBI:30616"/>
    </ligand>
</feature>
<feature type="binding site" evidence="1">
    <location>
        <position position="388"/>
    </location>
    <ligand>
        <name>L-serine</name>
        <dbReference type="ChEBI" id="CHEBI:33384"/>
    </ligand>
</feature>
<accession>Q39IN7</accession>
<proteinExistence type="inferred from homology"/>